<reference key="1">
    <citation type="journal article" date="2000" name="DNA Res.">
        <title>Complete genome structure of the nitrogen-fixing symbiotic bacterium Mesorhizobium loti.</title>
        <authorList>
            <person name="Kaneko T."/>
            <person name="Nakamura Y."/>
            <person name="Sato S."/>
            <person name="Asamizu E."/>
            <person name="Kato T."/>
            <person name="Sasamoto S."/>
            <person name="Watanabe A."/>
            <person name="Idesawa K."/>
            <person name="Ishikawa A."/>
            <person name="Kawashima K."/>
            <person name="Kimura T."/>
            <person name="Kishida Y."/>
            <person name="Kiyokawa C."/>
            <person name="Kohara M."/>
            <person name="Matsumoto M."/>
            <person name="Matsuno A."/>
            <person name="Mochizuki Y."/>
            <person name="Nakayama S."/>
            <person name="Nakazaki N."/>
            <person name="Shimpo S."/>
            <person name="Sugimoto M."/>
            <person name="Takeuchi C."/>
            <person name="Yamada M."/>
            <person name="Tabata S."/>
        </authorList>
    </citation>
    <scope>NUCLEOTIDE SEQUENCE [LARGE SCALE GENOMIC DNA]</scope>
    <source>
        <strain>LMG 29417 / CECT 9101 / MAFF 303099</strain>
    </source>
</reference>
<keyword id="KW-0030">Aminoacyl-tRNA synthetase</keyword>
<keyword id="KW-0067">ATP-binding</keyword>
<keyword id="KW-0175">Coiled coil</keyword>
<keyword id="KW-0963">Cytoplasm</keyword>
<keyword id="KW-0436">Ligase</keyword>
<keyword id="KW-0547">Nucleotide-binding</keyword>
<keyword id="KW-0648">Protein biosynthesis</keyword>
<gene>
    <name evidence="1" type="primary">valS</name>
    <name type="ordered locus">mll1104</name>
</gene>
<organism>
    <name type="scientific">Mesorhizobium japonicum (strain LMG 29417 / CECT 9101 / MAFF 303099)</name>
    <name type="common">Mesorhizobium loti (strain MAFF 303099)</name>
    <dbReference type="NCBI Taxonomy" id="266835"/>
    <lineage>
        <taxon>Bacteria</taxon>
        <taxon>Pseudomonadati</taxon>
        <taxon>Pseudomonadota</taxon>
        <taxon>Alphaproteobacteria</taxon>
        <taxon>Hyphomicrobiales</taxon>
        <taxon>Phyllobacteriaceae</taxon>
        <taxon>Mesorhizobium</taxon>
    </lineage>
</organism>
<feature type="chain" id="PRO_0000224544" description="Valine--tRNA ligase">
    <location>
        <begin position="1"/>
        <end position="927"/>
    </location>
</feature>
<feature type="coiled-coil region" evidence="1">
    <location>
        <begin position="856"/>
        <end position="917"/>
    </location>
</feature>
<feature type="short sequence motif" description="'HIGH' region">
    <location>
        <begin position="45"/>
        <end position="55"/>
    </location>
</feature>
<feature type="short sequence motif" description="'KMSKS' region">
    <location>
        <begin position="571"/>
        <end position="575"/>
    </location>
</feature>
<feature type="binding site" evidence="1">
    <location>
        <position position="574"/>
    </location>
    <ligand>
        <name>ATP</name>
        <dbReference type="ChEBI" id="CHEBI:30616"/>
    </ligand>
</feature>
<name>SYV_RHILO</name>
<comment type="function">
    <text evidence="1">Catalyzes the attachment of valine to tRNA(Val). As ValRS can inadvertently accommodate and process structurally similar amino acids such as threonine, to avoid such errors, it has a 'posttransfer' editing activity that hydrolyzes mischarged Thr-tRNA(Val) in a tRNA-dependent manner.</text>
</comment>
<comment type="catalytic activity">
    <reaction evidence="1">
        <text>tRNA(Val) + L-valine + ATP = L-valyl-tRNA(Val) + AMP + diphosphate</text>
        <dbReference type="Rhea" id="RHEA:10704"/>
        <dbReference type="Rhea" id="RHEA-COMP:9672"/>
        <dbReference type="Rhea" id="RHEA-COMP:9708"/>
        <dbReference type="ChEBI" id="CHEBI:30616"/>
        <dbReference type="ChEBI" id="CHEBI:33019"/>
        <dbReference type="ChEBI" id="CHEBI:57762"/>
        <dbReference type="ChEBI" id="CHEBI:78442"/>
        <dbReference type="ChEBI" id="CHEBI:78537"/>
        <dbReference type="ChEBI" id="CHEBI:456215"/>
        <dbReference type="EC" id="6.1.1.9"/>
    </reaction>
</comment>
<comment type="subunit">
    <text evidence="1">Monomer.</text>
</comment>
<comment type="subcellular location">
    <subcellularLocation>
        <location evidence="1">Cytoplasm</location>
    </subcellularLocation>
</comment>
<comment type="domain">
    <text evidence="1">ValRS has two distinct active sites: one for aminoacylation and one for editing. The misactivated threonine is translocated from the active site to the editing site.</text>
</comment>
<comment type="domain">
    <text evidence="1">The C-terminal coiled-coil domain is crucial for aminoacylation activity.</text>
</comment>
<comment type="similarity">
    <text evidence="1">Belongs to the class-I aminoacyl-tRNA synthetase family. ValS type 1 subfamily.</text>
</comment>
<sequence length="927" mass="104995">MLEKTYDAKTVEPKIAKVWEEADAFRAGAGAEEGAEAFTIVIPPPNVTGSLHMGHALNNTLQDILVRFERMRGKNVLWQPGMDHAGIATQMVVERQLMEKQIHRRDLTREQFIEKVWEWKAESGGTIFNQLKRLGASADWSRERFTMDEGLSKAVLEVFVTLYKEGLIYKDKRLVNWDPRLLTAISDLEVEQHEVNGNLWHFRYPLEGETFDPENPKTFITVATTRPETMLGDTAVAVHPDDERYRHLVGKNVVLPIVGRKIPVVADEYSDPEKGSGAVKITPAHDFNDFEVGKRHKLPAINILTVEAAIKLKDNEDFLAGLDATPERQAVWDELDGLDRFVARKKIVELMEEGGFLEKVEPHRHAVPHGDRGGVPIEPFLTEQWYANAAELAKPAIASVREGRTNFVPKNWEKTYFDWMENIQPWCISRQLWWGHQIPAWYGPDGRVFVEKTEEEALSAAIEYYLALEGPWKAWVEDRLENFQPGEILTRDEDVLDTWFSSALWPFSTLGWPDQTPELKTYYQTDVLVTGFDIIFFWVARMMMMGLHFMDEEPFHTVYVHALVRDKNGAKMSKSKGNVIDPLDLIDEYGADALRFTLTVMAAQGRDVKLDPARIAGYRNFGTKLWNATRFAEMNEVARNDDFWLNDAKLAVNRWILTELTRAARQITDGITSYRFNEAAGAAYRFVWNLFCDWYLELLKPVFMGTDEAAKAESRACVAFVLDEIYKLLHPMMPFMTEELWAQTAGEGKERESLLCHAAWPSPDFEDDEAAADINWLVDLVSGIRSVRSEMNVPPAAIAPLVVVGANGVTRERLVRQDSAIKRLARVGDISLADAAPKGSAQIVLNEATICLPLGSLIDLAAEAARLQKELAKVTEEIARLHKKLSNERFVASAPAEIVEAEREKLAEYRDAQDKLAVALTRVRDAG</sequence>
<proteinExistence type="inferred from homology"/>
<accession>Q98LB1</accession>
<protein>
    <recommendedName>
        <fullName evidence="1">Valine--tRNA ligase</fullName>
        <ecNumber evidence="1">6.1.1.9</ecNumber>
    </recommendedName>
    <alternativeName>
        <fullName evidence="1">Valyl-tRNA synthetase</fullName>
        <shortName evidence="1">ValRS</shortName>
    </alternativeName>
</protein>
<dbReference type="EC" id="6.1.1.9" evidence="1"/>
<dbReference type="EMBL" id="BA000012">
    <property type="protein sequence ID" value="BAB48552.1"/>
    <property type="molecule type" value="Genomic_DNA"/>
</dbReference>
<dbReference type="RefSeq" id="WP_010909906.1">
    <property type="nucleotide sequence ID" value="NC_002678.2"/>
</dbReference>
<dbReference type="SMR" id="Q98LB1"/>
<dbReference type="KEGG" id="mlo:mll1104"/>
<dbReference type="PATRIC" id="fig|266835.9.peg.890"/>
<dbReference type="eggNOG" id="COG0525">
    <property type="taxonomic scope" value="Bacteria"/>
</dbReference>
<dbReference type="HOGENOM" id="CLU_001493_0_2_5"/>
<dbReference type="Proteomes" id="UP000000552">
    <property type="component" value="Chromosome"/>
</dbReference>
<dbReference type="GO" id="GO:0005829">
    <property type="term" value="C:cytosol"/>
    <property type="evidence" value="ECO:0007669"/>
    <property type="project" value="TreeGrafter"/>
</dbReference>
<dbReference type="GO" id="GO:0002161">
    <property type="term" value="F:aminoacyl-tRNA deacylase activity"/>
    <property type="evidence" value="ECO:0007669"/>
    <property type="project" value="InterPro"/>
</dbReference>
<dbReference type="GO" id="GO:0005524">
    <property type="term" value="F:ATP binding"/>
    <property type="evidence" value="ECO:0007669"/>
    <property type="project" value="UniProtKB-UniRule"/>
</dbReference>
<dbReference type="GO" id="GO:0004832">
    <property type="term" value="F:valine-tRNA ligase activity"/>
    <property type="evidence" value="ECO:0007669"/>
    <property type="project" value="UniProtKB-UniRule"/>
</dbReference>
<dbReference type="GO" id="GO:0006438">
    <property type="term" value="P:valyl-tRNA aminoacylation"/>
    <property type="evidence" value="ECO:0007669"/>
    <property type="project" value="UniProtKB-UniRule"/>
</dbReference>
<dbReference type="CDD" id="cd07962">
    <property type="entry name" value="Anticodon_Ia_Val"/>
    <property type="match status" value="1"/>
</dbReference>
<dbReference type="CDD" id="cd00817">
    <property type="entry name" value="ValRS_core"/>
    <property type="match status" value="1"/>
</dbReference>
<dbReference type="FunFam" id="1.10.287.380:FF:000001">
    <property type="entry name" value="Valine--tRNA ligase"/>
    <property type="match status" value="1"/>
</dbReference>
<dbReference type="FunFam" id="3.40.50.620:FF:000032">
    <property type="entry name" value="Valine--tRNA ligase"/>
    <property type="match status" value="1"/>
</dbReference>
<dbReference type="Gene3D" id="3.40.50.620">
    <property type="entry name" value="HUPs"/>
    <property type="match status" value="2"/>
</dbReference>
<dbReference type="Gene3D" id="1.10.730.10">
    <property type="entry name" value="Isoleucyl-tRNA Synthetase, Domain 1"/>
    <property type="match status" value="1"/>
</dbReference>
<dbReference type="Gene3D" id="1.10.287.380">
    <property type="entry name" value="Valyl-tRNA synthetase, C-terminal domain"/>
    <property type="match status" value="1"/>
</dbReference>
<dbReference type="Gene3D" id="3.90.740.10">
    <property type="entry name" value="Valyl/Leucyl/Isoleucyl-tRNA synthetase, editing domain"/>
    <property type="match status" value="2"/>
</dbReference>
<dbReference type="HAMAP" id="MF_02004">
    <property type="entry name" value="Val_tRNA_synth_type1"/>
    <property type="match status" value="1"/>
</dbReference>
<dbReference type="InterPro" id="IPR001412">
    <property type="entry name" value="aa-tRNA-synth_I_CS"/>
</dbReference>
<dbReference type="InterPro" id="IPR002300">
    <property type="entry name" value="aa-tRNA-synth_Ia"/>
</dbReference>
<dbReference type="InterPro" id="IPR033705">
    <property type="entry name" value="Anticodon_Ia_Val"/>
</dbReference>
<dbReference type="InterPro" id="IPR013155">
    <property type="entry name" value="M/V/L/I-tRNA-synth_anticd-bd"/>
</dbReference>
<dbReference type="InterPro" id="IPR014729">
    <property type="entry name" value="Rossmann-like_a/b/a_fold"/>
</dbReference>
<dbReference type="InterPro" id="IPR010978">
    <property type="entry name" value="tRNA-bd_arm"/>
</dbReference>
<dbReference type="InterPro" id="IPR009080">
    <property type="entry name" value="tRNAsynth_Ia_anticodon-bd"/>
</dbReference>
<dbReference type="InterPro" id="IPR037118">
    <property type="entry name" value="Val-tRNA_synth_C_sf"/>
</dbReference>
<dbReference type="InterPro" id="IPR019499">
    <property type="entry name" value="Val-tRNA_synth_tRNA-bd"/>
</dbReference>
<dbReference type="InterPro" id="IPR009008">
    <property type="entry name" value="Val/Leu/Ile-tRNA-synth_edit"/>
</dbReference>
<dbReference type="InterPro" id="IPR002303">
    <property type="entry name" value="Valyl-tRNA_ligase"/>
</dbReference>
<dbReference type="NCBIfam" id="NF004349">
    <property type="entry name" value="PRK05729.1"/>
    <property type="match status" value="1"/>
</dbReference>
<dbReference type="NCBIfam" id="TIGR00422">
    <property type="entry name" value="valS"/>
    <property type="match status" value="1"/>
</dbReference>
<dbReference type="PANTHER" id="PTHR11946:SF93">
    <property type="entry name" value="VALINE--TRNA LIGASE, CHLOROPLASTIC_MITOCHONDRIAL 2"/>
    <property type="match status" value="1"/>
</dbReference>
<dbReference type="PANTHER" id="PTHR11946">
    <property type="entry name" value="VALYL-TRNA SYNTHETASES"/>
    <property type="match status" value="1"/>
</dbReference>
<dbReference type="Pfam" id="PF08264">
    <property type="entry name" value="Anticodon_1"/>
    <property type="match status" value="1"/>
</dbReference>
<dbReference type="Pfam" id="PF00133">
    <property type="entry name" value="tRNA-synt_1"/>
    <property type="match status" value="1"/>
</dbReference>
<dbReference type="Pfam" id="PF10458">
    <property type="entry name" value="Val_tRNA-synt_C"/>
    <property type="match status" value="1"/>
</dbReference>
<dbReference type="PRINTS" id="PR00986">
    <property type="entry name" value="TRNASYNTHVAL"/>
</dbReference>
<dbReference type="SUPFAM" id="SSF47323">
    <property type="entry name" value="Anticodon-binding domain of a subclass of class I aminoacyl-tRNA synthetases"/>
    <property type="match status" value="1"/>
</dbReference>
<dbReference type="SUPFAM" id="SSF52374">
    <property type="entry name" value="Nucleotidylyl transferase"/>
    <property type="match status" value="1"/>
</dbReference>
<dbReference type="SUPFAM" id="SSF46589">
    <property type="entry name" value="tRNA-binding arm"/>
    <property type="match status" value="1"/>
</dbReference>
<dbReference type="SUPFAM" id="SSF50677">
    <property type="entry name" value="ValRS/IleRS/LeuRS editing domain"/>
    <property type="match status" value="1"/>
</dbReference>
<dbReference type="PROSITE" id="PS00178">
    <property type="entry name" value="AA_TRNA_LIGASE_I"/>
    <property type="match status" value="1"/>
</dbReference>
<evidence type="ECO:0000255" key="1">
    <source>
        <dbReference type="HAMAP-Rule" id="MF_02004"/>
    </source>
</evidence>